<dbReference type="EMBL" id="CP000009">
    <property type="protein sequence ID" value="AAW61392.1"/>
    <property type="molecule type" value="Genomic_DNA"/>
</dbReference>
<dbReference type="RefSeq" id="WP_011253174.1">
    <property type="nucleotide sequence ID" value="NZ_LT900338.1"/>
</dbReference>
<dbReference type="SMR" id="Q5FQF4"/>
<dbReference type="STRING" id="290633.GOX1651"/>
<dbReference type="KEGG" id="gox:GOX1651"/>
<dbReference type="eggNOG" id="COG2332">
    <property type="taxonomic scope" value="Bacteria"/>
</dbReference>
<dbReference type="HOGENOM" id="CLU_079503_1_1_5"/>
<dbReference type="Proteomes" id="UP000006375">
    <property type="component" value="Chromosome"/>
</dbReference>
<dbReference type="GO" id="GO:0005886">
    <property type="term" value="C:plasma membrane"/>
    <property type="evidence" value="ECO:0007669"/>
    <property type="project" value="UniProtKB-SubCell"/>
</dbReference>
<dbReference type="GO" id="GO:0020037">
    <property type="term" value="F:heme binding"/>
    <property type="evidence" value="ECO:0007669"/>
    <property type="project" value="InterPro"/>
</dbReference>
<dbReference type="GO" id="GO:0046872">
    <property type="term" value="F:metal ion binding"/>
    <property type="evidence" value="ECO:0007669"/>
    <property type="project" value="UniProtKB-KW"/>
</dbReference>
<dbReference type="GO" id="GO:0017004">
    <property type="term" value="P:cytochrome complex assembly"/>
    <property type="evidence" value="ECO:0007669"/>
    <property type="project" value="UniProtKB-KW"/>
</dbReference>
<dbReference type="FunFam" id="2.40.50.140:FF:000104">
    <property type="entry name" value="Cytochrome c-type biogenesis protein CcmE"/>
    <property type="match status" value="1"/>
</dbReference>
<dbReference type="Gene3D" id="2.40.50.140">
    <property type="entry name" value="Nucleic acid-binding proteins"/>
    <property type="match status" value="1"/>
</dbReference>
<dbReference type="HAMAP" id="MF_01959">
    <property type="entry name" value="CcmE"/>
    <property type="match status" value="1"/>
</dbReference>
<dbReference type="InterPro" id="IPR004329">
    <property type="entry name" value="CcmE"/>
</dbReference>
<dbReference type="InterPro" id="IPR036127">
    <property type="entry name" value="CcmE-like_sf"/>
</dbReference>
<dbReference type="InterPro" id="IPR012340">
    <property type="entry name" value="NA-bd_OB-fold"/>
</dbReference>
<dbReference type="NCBIfam" id="NF009727">
    <property type="entry name" value="PRK13254.1-1"/>
    <property type="match status" value="1"/>
</dbReference>
<dbReference type="NCBIfam" id="NF009731">
    <property type="entry name" value="PRK13254.1-5"/>
    <property type="match status" value="1"/>
</dbReference>
<dbReference type="PANTHER" id="PTHR34128">
    <property type="entry name" value="CYTOCHROME C-TYPE BIOGENESIS PROTEIN CCME HOMOLOG, MITOCHONDRIAL"/>
    <property type="match status" value="1"/>
</dbReference>
<dbReference type="PANTHER" id="PTHR34128:SF2">
    <property type="entry name" value="CYTOCHROME C-TYPE BIOGENESIS PROTEIN CCME HOMOLOG, MITOCHONDRIAL"/>
    <property type="match status" value="1"/>
</dbReference>
<dbReference type="Pfam" id="PF03100">
    <property type="entry name" value="CcmE"/>
    <property type="match status" value="1"/>
</dbReference>
<dbReference type="SUPFAM" id="SSF82093">
    <property type="entry name" value="Heme chaperone CcmE"/>
    <property type="match status" value="1"/>
</dbReference>
<keyword id="KW-0997">Cell inner membrane</keyword>
<keyword id="KW-1003">Cell membrane</keyword>
<keyword id="KW-0201">Cytochrome c-type biogenesis</keyword>
<keyword id="KW-0349">Heme</keyword>
<keyword id="KW-0408">Iron</keyword>
<keyword id="KW-0472">Membrane</keyword>
<keyword id="KW-0479">Metal-binding</keyword>
<keyword id="KW-1185">Reference proteome</keyword>
<keyword id="KW-0735">Signal-anchor</keyword>
<keyword id="KW-0812">Transmembrane</keyword>
<keyword id="KW-1133">Transmembrane helix</keyword>
<reference key="1">
    <citation type="journal article" date="2005" name="Nat. Biotechnol.">
        <title>Complete genome sequence of the acetic acid bacterium Gluconobacter oxydans.</title>
        <authorList>
            <person name="Prust C."/>
            <person name="Hoffmeister M."/>
            <person name="Liesegang H."/>
            <person name="Wiezer A."/>
            <person name="Fricke W.F."/>
            <person name="Ehrenreich A."/>
            <person name="Gottschalk G."/>
            <person name="Deppenmeier U."/>
        </authorList>
    </citation>
    <scope>NUCLEOTIDE SEQUENCE [LARGE SCALE GENOMIC DNA]</scope>
    <source>
        <strain>621H</strain>
    </source>
</reference>
<evidence type="ECO:0000255" key="1">
    <source>
        <dbReference type="HAMAP-Rule" id="MF_01959"/>
    </source>
</evidence>
<evidence type="ECO:0000256" key="2">
    <source>
        <dbReference type="SAM" id="MobiDB-lite"/>
    </source>
</evidence>
<organism>
    <name type="scientific">Gluconobacter oxydans (strain 621H)</name>
    <name type="common">Gluconobacter suboxydans</name>
    <dbReference type="NCBI Taxonomy" id="290633"/>
    <lineage>
        <taxon>Bacteria</taxon>
        <taxon>Pseudomonadati</taxon>
        <taxon>Pseudomonadota</taxon>
        <taxon>Alphaproteobacteria</taxon>
        <taxon>Acetobacterales</taxon>
        <taxon>Acetobacteraceae</taxon>
        <taxon>Gluconobacter</taxon>
    </lineage>
</organism>
<accession>Q5FQF4</accession>
<protein>
    <recommendedName>
        <fullName evidence="1">Cytochrome c-type biogenesis protein CcmE</fullName>
    </recommendedName>
    <alternativeName>
        <fullName evidence="1">Cytochrome c maturation protein E</fullName>
    </alternativeName>
    <alternativeName>
        <fullName evidence="1">Heme chaperone CcmE</fullName>
    </alternativeName>
</protein>
<name>CCME_GLUOX</name>
<sequence>MTRKTRRLWIVIACLACVGSAAALTLRAFSSNIVFFMAPSQVKANPPSPDRTIRLGGMVMAGSLHRINENGTPVNAFEVTDGQAAVEVHYTGILPDLFREGQSVVALGTVQKDGGFTASEVLAKHDETYMPKEVADELKRTGKWDPRFGKAPDASSWDTMTAKKAGG</sequence>
<proteinExistence type="inferred from homology"/>
<gene>
    <name evidence="1" type="primary">ccmE</name>
    <name evidence="1" type="synonym">cycJ</name>
    <name type="ordered locus">GOX1651</name>
</gene>
<comment type="function">
    <text evidence="1">Heme chaperone required for the biogenesis of c-type cytochromes. Transiently binds heme delivered by CcmC and transfers the heme to apo-cytochromes in a process facilitated by CcmF and CcmH.</text>
</comment>
<comment type="subcellular location">
    <subcellularLocation>
        <location evidence="1">Cell inner membrane</location>
        <topology evidence="1">Single-pass type II membrane protein</topology>
        <orientation evidence="1">Periplasmic side</orientation>
    </subcellularLocation>
</comment>
<comment type="similarity">
    <text evidence="1">Belongs to the CcmE/CycJ family.</text>
</comment>
<feature type="chain" id="PRO_0000238811" description="Cytochrome c-type biogenesis protein CcmE">
    <location>
        <begin position="1"/>
        <end position="167"/>
    </location>
</feature>
<feature type="topological domain" description="Cytoplasmic" evidence="1">
    <location>
        <begin position="1"/>
        <end position="7"/>
    </location>
</feature>
<feature type="transmembrane region" description="Helical; Signal-anchor for type II membrane protein" evidence="1">
    <location>
        <begin position="8"/>
        <end position="28"/>
    </location>
</feature>
<feature type="topological domain" description="Periplasmic" evidence="1">
    <location>
        <begin position="29"/>
        <end position="167"/>
    </location>
</feature>
<feature type="region of interest" description="Disordered" evidence="2">
    <location>
        <begin position="141"/>
        <end position="167"/>
    </location>
</feature>
<feature type="compositionally biased region" description="Basic and acidic residues" evidence="2">
    <location>
        <begin position="141"/>
        <end position="150"/>
    </location>
</feature>
<feature type="binding site" description="covalent" evidence="1">
    <location>
        <position position="125"/>
    </location>
    <ligand>
        <name>heme</name>
        <dbReference type="ChEBI" id="CHEBI:30413"/>
    </ligand>
</feature>
<feature type="binding site" description="axial binding residue" evidence="1">
    <location>
        <position position="129"/>
    </location>
    <ligand>
        <name>heme</name>
        <dbReference type="ChEBI" id="CHEBI:30413"/>
    </ligand>
    <ligandPart>
        <name>Fe</name>
        <dbReference type="ChEBI" id="CHEBI:18248"/>
    </ligandPart>
</feature>